<sequence length="296" mass="31799">MKLKRYLLVAKPGIIFGNLIAVAGGYFLAARGSVEPMLLLATVIGLSLVVASGCVLNNCIDRDIDRHMERTRGRVTVTGQISLKAALAHGLVLGVAGFGLLWWRTNPLTTALAGFGYFVYVGLYSLWFKRRSQYGTLVGSLSGAMPPVVGYCAVTGQFDAGAASLLAIFCLWQMPHSYAIAIFRLKDYEAAGIPVLPVARGIAVTKIHIVLYILAFMAATLALCLGGYAGYGYLLVAVAVSLWWLAIALTGYWTADDRLWARKLFAFSIVAITALSVMMSIDFQVAPATHLVASLP</sequence>
<protein>
    <recommendedName>
        <fullName evidence="1">Protoheme IX farnesyltransferase 2</fullName>
        <ecNumber evidence="1">2.5.1.141</ecNumber>
    </recommendedName>
    <alternativeName>
        <fullName evidence="1">Heme B farnesyltransferase 2</fullName>
    </alternativeName>
    <alternativeName>
        <fullName evidence="1">Heme O synthase 2</fullName>
    </alternativeName>
</protein>
<name>CYOE2_PSEP7</name>
<organism>
    <name type="scientific">Pseudomonas paraeruginosa (strain DSM 24068 / PA7)</name>
    <name type="common">Pseudomonas aeruginosa (strain PA7)</name>
    <dbReference type="NCBI Taxonomy" id="381754"/>
    <lineage>
        <taxon>Bacteria</taxon>
        <taxon>Pseudomonadati</taxon>
        <taxon>Pseudomonadota</taxon>
        <taxon>Gammaproteobacteria</taxon>
        <taxon>Pseudomonadales</taxon>
        <taxon>Pseudomonadaceae</taxon>
        <taxon>Pseudomonas</taxon>
        <taxon>Pseudomonas paraeruginosa</taxon>
    </lineage>
</organism>
<dbReference type="EC" id="2.5.1.141" evidence="1"/>
<dbReference type="EMBL" id="CP000744">
    <property type="protein sequence ID" value="ABR81989.1"/>
    <property type="molecule type" value="Genomic_DNA"/>
</dbReference>
<dbReference type="RefSeq" id="WP_003150082.1">
    <property type="nucleotide sequence ID" value="NC_009656.1"/>
</dbReference>
<dbReference type="SMR" id="A6V8N8"/>
<dbReference type="GeneID" id="77222105"/>
<dbReference type="KEGG" id="pap:PSPA7_4069"/>
<dbReference type="HOGENOM" id="CLU_029631_0_0_6"/>
<dbReference type="UniPathway" id="UPA00834">
    <property type="reaction ID" value="UER00712"/>
</dbReference>
<dbReference type="Proteomes" id="UP000001582">
    <property type="component" value="Chromosome"/>
</dbReference>
<dbReference type="GO" id="GO:0005886">
    <property type="term" value="C:plasma membrane"/>
    <property type="evidence" value="ECO:0007669"/>
    <property type="project" value="UniProtKB-SubCell"/>
</dbReference>
<dbReference type="GO" id="GO:0008495">
    <property type="term" value="F:protoheme IX farnesyltransferase activity"/>
    <property type="evidence" value="ECO:0007669"/>
    <property type="project" value="UniProtKB-UniRule"/>
</dbReference>
<dbReference type="GO" id="GO:0048034">
    <property type="term" value="P:heme O biosynthetic process"/>
    <property type="evidence" value="ECO:0007669"/>
    <property type="project" value="UniProtKB-UniRule"/>
</dbReference>
<dbReference type="CDD" id="cd13957">
    <property type="entry name" value="PT_UbiA_Cox10"/>
    <property type="match status" value="1"/>
</dbReference>
<dbReference type="FunFam" id="1.10.357.140:FF:000001">
    <property type="entry name" value="Protoheme IX farnesyltransferase"/>
    <property type="match status" value="1"/>
</dbReference>
<dbReference type="Gene3D" id="1.10.357.140">
    <property type="entry name" value="UbiA prenyltransferase"/>
    <property type="match status" value="1"/>
</dbReference>
<dbReference type="HAMAP" id="MF_00154">
    <property type="entry name" value="CyoE_CtaB"/>
    <property type="match status" value="1"/>
</dbReference>
<dbReference type="InterPro" id="IPR006369">
    <property type="entry name" value="Protohaem_IX_farnesylTrfase"/>
</dbReference>
<dbReference type="InterPro" id="IPR000537">
    <property type="entry name" value="UbiA_prenyltransferase"/>
</dbReference>
<dbReference type="InterPro" id="IPR030470">
    <property type="entry name" value="UbiA_prenylTrfase_CS"/>
</dbReference>
<dbReference type="InterPro" id="IPR044878">
    <property type="entry name" value="UbiA_sf"/>
</dbReference>
<dbReference type="NCBIfam" id="TIGR01473">
    <property type="entry name" value="cyoE_ctaB"/>
    <property type="match status" value="1"/>
</dbReference>
<dbReference type="NCBIfam" id="NF003348">
    <property type="entry name" value="PRK04375.1-1"/>
    <property type="match status" value="1"/>
</dbReference>
<dbReference type="PANTHER" id="PTHR43448">
    <property type="entry name" value="PROTOHEME IX FARNESYLTRANSFERASE, MITOCHONDRIAL"/>
    <property type="match status" value="1"/>
</dbReference>
<dbReference type="PANTHER" id="PTHR43448:SF2">
    <property type="entry name" value="PROTOHEME IX FARNESYLTRANSFERASE, MITOCHONDRIAL"/>
    <property type="match status" value="1"/>
</dbReference>
<dbReference type="Pfam" id="PF01040">
    <property type="entry name" value="UbiA"/>
    <property type="match status" value="1"/>
</dbReference>
<dbReference type="PROSITE" id="PS00943">
    <property type="entry name" value="UBIA"/>
    <property type="match status" value="1"/>
</dbReference>
<feature type="chain" id="PRO_0000346001" description="Protoheme IX farnesyltransferase 2">
    <location>
        <begin position="1"/>
        <end position="296"/>
    </location>
</feature>
<feature type="transmembrane region" description="Helical" evidence="1">
    <location>
        <begin position="7"/>
        <end position="27"/>
    </location>
</feature>
<feature type="transmembrane region" description="Helical" evidence="1">
    <location>
        <begin position="36"/>
        <end position="56"/>
    </location>
</feature>
<feature type="transmembrane region" description="Helical" evidence="1">
    <location>
        <begin position="83"/>
        <end position="103"/>
    </location>
</feature>
<feature type="transmembrane region" description="Helical" evidence="1">
    <location>
        <begin position="108"/>
        <end position="128"/>
    </location>
</feature>
<feature type="transmembrane region" description="Helical" evidence="1">
    <location>
        <begin position="134"/>
        <end position="154"/>
    </location>
</feature>
<feature type="transmembrane region" description="Helical" evidence="1">
    <location>
        <begin position="163"/>
        <end position="183"/>
    </location>
</feature>
<feature type="transmembrane region" description="Helical" evidence="1">
    <location>
        <begin position="207"/>
        <end position="227"/>
    </location>
</feature>
<feature type="transmembrane region" description="Helical" evidence="1">
    <location>
        <begin position="229"/>
        <end position="249"/>
    </location>
</feature>
<feature type="transmembrane region" description="Helical" evidence="1">
    <location>
        <begin position="265"/>
        <end position="285"/>
    </location>
</feature>
<evidence type="ECO:0000255" key="1">
    <source>
        <dbReference type="HAMAP-Rule" id="MF_00154"/>
    </source>
</evidence>
<keyword id="KW-0997">Cell inner membrane</keyword>
<keyword id="KW-1003">Cell membrane</keyword>
<keyword id="KW-0350">Heme biosynthesis</keyword>
<keyword id="KW-0472">Membrane</keyword>
<keyword id="KW-0808">Transferase</keyword>
<keyword id="KW-0812">Transmembrane</keyword>
<keyword id="KW-1133">Transmembrane helix</keyword>
<comment type="function">
    <text evidence="1">Converts heme B (protoheme IX) to heme O by substitution of the vinyl group on carbon 2 of heme B porphyrin ring with a hydroxyethyl farnesyl side group.</text>
</comment>
<comment type="catalytic activity">
    <reaction evidence="1">
        <text>heme b + (2E,6E)-farnesyl diphosphate + H2O = Fe(II)-heme o + diphosphate</text>
        <dbReference type="Rhea" id="RHEA:28070"/>
        <dbReference type="ChEBI" id="CHEBI:15377"/>
        <dbReference type="ChEBI" id="CHEBI:33019"/>
        <dbReference type="ChEBI" id="CHEBI:60344"/>
        <dbReference type="ChEBI" id="CHEBI:60530"/>
        <dbReference type="ChEBI" id="CHEBI:175763"/>
        <dbReference type="EC" id="2.5.1.141"/>
    </reaction>
</comment>
<comment type="pathway">
    <text evidence="1">Porphyrin-containing compound metabolism; heme O biosynthesis; heme O from protoheme: step 1/1.</text>
</comment>
<comment type="subcellular location">
    <subcellularLocation>
        <location evidence="1">Cell inner membrane</location>
        <topology evidence="1">Multi-pass membrane protein</topology>
    </subcellularLocation>
</comment>
<comment type="miscellaneous">
    <text evidence="1">Carbon 2 of the heme B porphyrin ring is defined according to the Fischer nomenclature.</text>
</comment>
<comment type="similarity">
    <text evidence="1">Belongs to the UbiA prenyltransferase family. Protoheme IX farnesyltransferase subfamily.</text>
</comment>
<gene>
    <name evidence="1" type="primary">cyoE2</name>
    <name type="ordered locus">PSPA7_4069</name>
</gene>
<accession>A6V8N8</accession>
<proteinExistence type="inferred from homology"/>
<reference key="1">
    <citation type="submission" date="2007-06" db="EMBL/GenBank/DDBJ databases">
        <authorList>
            <person name="Dodson R.J."/>
            <person name="Harkins D."/>
            <person name="Paulsen I.T."/>
        </authorList>
    </citation>
    <scope>NUCLEOTIDE SEQUENCE [LARGE SCALE GENOMIC DNA]</scope>
    <source>
        <strain>DSM 24068 / PA7</strain>
    </source>
</reference>